<gene>
    <name evidence="4" type="primary">nrtA</name>
    <name type="ordered locus">sll1450</name>
</gene>
<feature type="signal peptide" evidence="2">
    <location>
        <begin position="1"/>
        <end position="28"/>
    </location>
</feature>
<feature type="chain" id="PRO_0000057957" description="Nitrate/nitrite binding protein NrtA">
    <location>
        <begin position="29"/>
        <end position="446"/>
    </location>
</feature>
<feature type="binding site" evidence="3 7">
    <location>
        <position position="102"/>
    </location>
    <ligand>
        <name>nitrate</name>
        <dbReference type="ChEBI" id="CHEBI:17632"/>
    </ligand>
</feature>
<feature type="binding site" evidence="3 7">
    <location>
        <position position="155"/>
    </location>
    <ligand>
        <name>nitrate</name>
        <dbReference type="ChEBI" id="CHEBI:17632"/>
    </ligand>
</feature>
<feature type="binding site" evidence="3 7">
    <location>
        <position position="196"/>
    </location>
    <ligand>
        <name>nitrate</name>
        <dbReference type="ChEBI" id="CHEBI:17632"/>
    </ligand>
</feature>
<feature type="binding site" evidence="3 7">
    <location>
        <position position="240"/>
    </location>
    <ligand>
        <name>nitrate</name>
        <dbReference type="ChEBI" id="CHEBI:17632"/>
    </ligand>
</feature>
<feature type="binding site" evidence="3 7">
    <location>
        <position position="269"/>
    </location>
    <ligand>
        <name>nitrate</name>
        <dbReference type="ChEBI" id="CHEBI:17632"/>
    </ligand>
</feature>
<feature type="lipid moiety-binding region" description="N-palmitoyl cysteine" evidence="5">
    <location>
        <position position="29"/>
    </location>
</feature>
<feature type="lipid moiety-binding region" description="S-diacylglycerol cysteine" evidence="5">
    <location>
        <position position="29"/>
    </location>
</feature>
<feature type="strand" evidence="8">
    <location>
        <begin position="65"/>
        <end position="68"/>
    </location>
</feature>
<feature type="helix" evidence="8">
    <location>
        <begin position="72"/>
        <end position="74"/>
    </location>
</feature>
<feature type="helix" evidence="8">
    <location>
        <begin position="75"/>
        <end position="82"/>
    </location>
</feature>
<feature type="helix" evidence="8">
    <location>
        <begin position="85"/>
        <end position="88"/>
    </location>
</feature>
<feature type="strand" evidence="8">
    <location>
        <begin position="95"/>
        <end position="98"/>
    </location>
</feature>
<feature type="helix" evidence="8">
    <location>
        <begin position="102"/>
        <end position="111"/>
    </location>
</feature>
<feature type="helix" evidence="8">
    <location>
        <begin position="113"/>
        <end position="115"/>
    </location>
</feature>
<feature type="strand" evidence="8">
    <location>
        <begin position="119"/>
        <end position="124"/>
    </location>
</feature>
<feature type="helix" evidence="8">
    <location>
        <begin position="126"/>
        <end position="133"/>
    </location>
</feature>
<feature type="strand" evidence="8">
    <location>
        <begin position="137"/>
        <end position="139"/>
    </location>
</feature>
<feature type="strand" evidence="8">
    <location>
        <begin position="144"/>
        <end position="149"/>
    </location>
</feature>
<feature type="strand" evidence="8">
    <location>
        <begin position="155"/>
        <end position="159"/>
    </location>
</feature>
<feature type="helix" evidence="8">
    <location>
        <begin position="161"/>
        <end position="166"/>
    </location>
</feature>
<feature type="helix" evidence="8">
    <location>
        <begin position="175"/>
        <end position="180"/>
    </location>
</feature>
<feature type="strand" evidence="8">
    <location>
        <begin position="182"/>
        <end position="184"/>
    </location>
</feature>
<feature type="strand" evidence="8">
    <location>
        <begin position="186"/>
        <end position="191"/>
    </location>
</feature>
<feature type="helix" evidence="8">
    <location>
        <begin position="195"/>
        <end position="206"/>
    </location>
</feature>
<feature type="turn" evidence="8">
    <location>
        <begin position="211"/>
        <end position="213"/>
    </location>
</feature>
<feature type="strand" evidence="8">
    <location>
        <begin position="216"/>
        <end position="219"/>
    </location>
</feature>
<feature type="helix" evidence="8">
    <location>
        <begin position="222"/>
        <end position="224"/>
    </location>
</feature>
<feature type="helix" evidence="8">
    <location>
        <begin position="225"/>
        <end position="230"/>
    </location>
</feature>
<feature type="strand" evidence="8">
    <location>
        <begin position="235"/>
        <end position="240"/>
    </location>
</feature>
<feature type="helix" evidence="8">
    <location>
        <begin position="243"/>
        <end position="249"/>
    </location>
</feature>
<feature type="strand" evidence="8">
    <location>
        <begin position="254"/>
        <end position="258"/>
    </location>
</feature>
<feature type="helix" evidence="8">
    <location>
        <begin position="259"/>
        <end position="261"/>
    </location>
</feature>
<feature type="strand" evidence="8">
    <location>
        <begin position="269"/>
        <end position="274"/>
    </location>
</feature>
<feature type="helix" evidence="8">
    <location>
        <begin position="275"/>
        <end position="280"/>
    </location>
</feature>
<feature type="helix" evidence="8">
    <location>
        <begin position="282"/>
        <end position="300"/>
    </location>
</feature>
<feature type="helix" evidence="8">
    <location>
        <begin position="302"/>
        <end position="304"/>
    </location>
</feature>
<feature type="helix" evidence="8">
    <location>
        <begin position="305"/>
        <end position="313"/>
    </location>
</feature>
<feature type="turn" evidence="8">
    <location>
        <begin position="315"/>
        <end position="318"/>
    </location>
</feature>
<feature type="helix" evidence="8">
    <location>
        <begin position="322"/>
        <end position="324"/>
    </location>
</feature>
<feature type="turn" evidence="8">
    <location>
        <begin position="325"/>
        <end position="327"/>
    </location>
</feature>
<feature type="helix" evidence="8">
    <location>
        <begin position="328"/>
        <end position="330"/>
    </location>
</feature>
<feature type="strand" evidence="8">
    <location>
        <begin position="350"/>
        <end position="352"/>
    </location>
</feature>
<feature type="helix" evidence="8">
    <location>
        <begin position="353"/>
        <end position="355"/>
    </location>
</feature>
<feature type="helix" evidence="8">
    <location>
        <begin position="361"/>
        <end position="373"/>
    </location>
</feature>
<feature type="helix" evidence="8">
    <location>
        <begin position="383"/>
        <end position="390"/>
    </location>
</feature>
<feature type="helix" evidence="8">
    <location>
        <begin position="393"/>
        <end position="402"/>
    </location>
</feature>
<feature type="helix" evidence="8">
    <location>
        <begin position="407"/>
        <end position="409"/>
    </location>
</feature>
<feature type="strand" evidence="8">
    <location>
        <begin position="412"/>
        <end position="414"/>
    </location>
</feature>
<feature type="strand" evidence="8">
    <location>
        <begin position="419"/>
        <end position="421"/>
    </location>
</feature>
<feature type="helix" evidence="8">
    <location>
        <begin position="432"/>
        <end position="437"/>
    </location>
</feature>
<sequence length="446" mass="48967">MSNFSRSTRRKFMFTAGAAAIGGVVLHGCTSPTTTSTGTGTGSSTDQAISPLVEGENAPEVTTAKLGFIALTDAAPLIIAKEKGFYAKYGMPDVEVLKQASWGTTRDNLVLGSASGGIDGAHILTPMPYLITMGTVTDGKPTPMYILARLNVNGQGIQLGNNYKDLKVGTDAAPLKEAFAKVTDPKVAMTFPGGTHDMWIRYWLAAGGMEPGKDFSTIVVPPAQMVANVKVNAMESFCVGEPWPLQTVNQGVGYQALTTGQLWKDHPEKAFGMRADWVDQNPKAAKALLMAVMEAQQWCDQAENKEEMCQILSKREWFKVPFEDIIDRSKGIYNFGNGQETFEDQEIMQKYWVDNASYPYKSHDQWFLTENIRWGYLPASTDTKAIVDKVNREDLWREAAQALEVPADQIPSSPSRGIETFFDGITFDPENPQAYLDSLKIKSIKA</sequence>
<comment type="function">
    <text evidence="1 3">Part of the ABC transporter complex NrtABCD involved in nitrate uptake (PubMed:16777960). The complex is probably also involved in nitrite transport (By similarity). NrtA is the substrate-binding protein (PubMed:16777960). Binds nitrate (PubMed:16777960).</text>
</comment>
<comment type="subunit">
    <text evidence="6">The complex is composed of two ATP-binding proteins (NrtC and NrtD), two transmembrane proteins (NrtB) and a solute-binding protein (NrtA).</text>
</comment>
<comment type="subcellular location">
    <subcellularLocation>
        <location evidence="6">Cell inner membrane</location>
        <topology evidence="6">Lipid-anchor</topology>
        <orientation evidence="6">Periplasmic side</orientation>
    </subcellularLocation>
</comment>
<comment type="domain">
    <text evidence="3">Composed of two domains (I and II) organized with a C-clamp shape.</text>
</comment>
<comment type="similarity">
    <text evidence="5">Belongs to the CmpA/NrtA family.</text>
</comment>
<protein>
    <recommendedName>
        <fullName evidence="5">Nitrate/nitrite binding protein NrtA</fullName>
    </recommendedName>
</protein>
<organism>
    <name type="scientific">Synechocystis sp. (strain ATCC 27184 / PCC 6803 / Kazusa)</name>
    <dbReference type="NCBI Taxonomy" id="1111708"/>
    <lineage>
        <taxon>Bacteria</taxon>
        <taxon>Bacillati</taxon>
        <taxon>Cyanobacteriota</taxon>
        <taxon>Cyanophyceae</taxon>
        <taxon>Synechococcales</taxon>
        <taxon>Merismopediaceae</taxon>
        <taxon>Synechocystis</taxon>
    </lineage>
</organism>
<name>NRTA_SYNY3</name>
<proteinExistence type="evidence at protein level"/>
<keyword id="KW-0002">3D-structure</keyword>
<keyword id="KW-0997">Cell inner membrane</keyword>
<keyword id="KW-1003">Cell membrane</keyword>
<keyword id="KW-0406">Ion transport</keyword>
<keyword id="KW-0449">Lipoprotein</keyword>
<keyword id="KW-0472">Membrane</keyword>
<keyword id="KW-0534">Nitrate assimilation</keyword>
<keyword id="KW-0564">Palmitate</keyword>
<keyword id="KW-1185">Reference proteome</keyword>
<keyword id="KW-0732">Signal</keyword>
<keyword id="KW-0813">Transport</keyword>
<dbReference type="EMBL" id="BA000022">
    <property type="protein sequence ID" value="BAA17492.1"/>
    <property type="molecule type" value="Genomic_DNA"/>
</dbReference>
<dbReference type="PIR" id="S77389">
    <property type="entry name" value="S77389"/>
</dbReference>
<dbReference type="PDB" id="2G29">
    <property type="method" value="X-ray"/>
    <property type="resolution" value="1.50 A"/>
    <property type="chains" value="A=30-446"/>
</dbReference>
<dbReference type="PDBsum" id="2G29"/>
<dbReference type="SMR" id="P73452"/>
<dbReference type="STRING" id="1148.gene:10498357"/>
<dbReference type="PaxDb" id="1148-1652571"/>
<dbReference type="EnsemblBacteria" id="BAA17492">
    <property type="protein sequence ID" value="BAA17492"/>
    <property type="gene ID" value="BAA17492"/>
</dbReference>
<dbReference type="KEGG" id="syn:sll1450"/>
<dbReference type="eggNOG" id="COG0715">
    <property type="taxonomic scope" value="Bacteria"/>
</dbReference>
<dbReference type="InParanoid" id="P73452"/>
<dbReference type="PhylomeDB" id="P73452"/>
<dbReference type="EvolutionaryTrace" id="P73452"/>
<dbReference type="Proteomes" id="UP000001425">
    <property type="component" value="Chromosome"/>
</dbReference>
<dbReference type="GO" id="GO:0005886">
    <property type="term" value="C:plasma membrane"/>
    <property type="evidence" value="ECO:0007669"/>
    <property type="project" value="UniProtKB-SubCell"/>
</dbReference>
<dbReference type="GO" id="GO:0009970">
    <property type="term" value="P:cellular response to sulfate starvation"/>
    <property type="evidence" value="ECO:0000318"/>
    <property type="project" value="GO_Central"/>
</dbReference>
<dbReference type="GO" id="GO:0006811">
    <property type="term" value="P:monoatomic ion transport"/>
    <property type="evidence" value="ECO:0007669"/>
    <property type="project" value="UniProtKB-KW"/>
</dbReference>
<dbReference type="GO" id="GO:0042128">
    <property type="term" value="P:nitrate assimilation"/>
    <property type="evidence" value="ECO:0007669"/>
    <property type="project" value="UniProtKB-KW"/>
</dbReference>
<dbReference type="CDD" id="cd13553">
    <property type="entry name" value="PBP2_NrtA_CpmA_like"/>
    <property type="match status" value="1"/>
</dbReference>
<dbReference type="Gene3D" id="3.40.190.10">
    <property type="entry name" value="Periplasmic binding protein-like II"/>
    <property type="match status" value="2"/>
</dbReference>
<dbReference type="InterPro" id="IPR029070">
    <property type="entry name" value="Chitinase_insertion_sf"/>
</dbReference>
<dbReference type="InterPro" id="IPR044527">
    <property type="entry name" value="NrtA/CpmA_ABC-bd_dom"/>
</dbReference>
<dbReference type="InterPro" id="IPR006311">
    <property type="entry name" value="TAT_signal"/>
</dbReference>
<dbReference type="PANTHER" id="PTHR30024">
    <property type="entry name" value="ALIPHATIC SULFONATES-BINDING PROTEIN-RELATED"/>
    <property type="match status" value="1"/>
</dbReference>
<dbReference type="PANTHER" id="PTHR30024:SF7">
    <property type="entry name" value="NITRATE_NITRITE BINDING PROTEIN NRTA"/>
    <property type="match status" value="1"/>
</dbReference>
<dbReference type="Pfam" id="PF13379">
    <property type="entry name" value="NMT1_2"/>
    <property type="match status" value="1"/>
</dbReference>
<dbReference type="SUPFAM" id="SSF54556">
    <property type="entry name" value="Chitinase insertion domain"/>
    <property type="match status" value="1"/>
</dbReference>
<dbReference type="SUPFAM" id="SSF53850">
    <property type="entry name" value="Periplasmic binding protein-like II"/>
    <property type="match status" value="1"/>
</dbReference>
<reference key="1">
    <citation type="journal article" date="1996" name="DNA Res.">
        <title>Sequence analysis of the genome of the unicellular cyanobacterium Synechocystis sp. strain PCC6803. II. Sequence determination of the entire genome and assignment of potential protein-coding regions.</title>
        <authorList>
            <person name="Kaneko T."/>
            <person name="Sato S."/>
            <person name="Kotani H."/>
            <person name="Tanaka A."/>
            <person name="Asamizu E."/>
            <person name="Nakamura Y."/>
            <person name="Miyajima N."/>
            <person name="Hirosawa M."/>
            <person name="Sugiura M."/>
            <person name="Sasamoto S."/>
            <person name="Kimura T."/>
            <person name="Hosouchi T."/>
            <person name="Matsuno A."/>
            <person name="Muraki A."/>
            <person name="Nakazaki N."/>
            <person name="Naruo K."/>
            <person name="Okumura S."/>
            <person name="Shimpo S."/>
            <person name="Takeuchi C."/>
            <person name="Wada T."/>
            <person name="Watanabe A."/>
            <person name="Yamada M."/>
            <person name="Yasuda M."/>
            <person name="Tabata S."/>
        </authorList>
    </citation>
    <scope>NUCLEOTIDE SEQUENCE [LARGE SCALE GENOMIC DNA]</scope>
    <source>
        <strain>ATCC 27184 / PCC 6803 / Kazusa</strain>
    </source>
</reference>
<reference evidence="7" key="2">
    <citation type="journal article" date="2006" name="Proc. Natl. Acad. Sci. U.S.A.">
        <title>Atomic structure of a nitrate-binding protein crucial for photosynthetic productivity.</title>
        <authorList>
            <person name="Koropatkin N.M."/>
            <person name="Pakrasi H.B."/>
            <person name="Smith T.J."/>
        </authorList>
    </citation>
    <scope>X-RAY CRYSTALLOGRAPHY (1.50 ANGSTROMS) OF 30-446 IN COMPLEX WITH NITRATE</scope>
    <scope>FUNCTION</scope>
    <scope>SUBUNIT</scope>
    <scope>SUBCELLULAR LOCATION</scope>
    <scope>DOMAIN</scope>
    <source>
        <strain>ATCC 27184 / PCC 6803 / Kazusa</strain>
    </source>
</reference>
<evidence type="ECO:0000250" key="1">
    <source>
        <dbReference type="UniProtKB" id="P38043"/>
    </source>
</evidence>
<evidence type="ECO:0000255" key="2"/>
<evidence type="ECO:0000269" key="3">
    <source>
    </source>
</evidence>
<evidence type="ECO:0000303" key="4">
    <source>
    </source>
</evidence>
<evidence type="ECO:0000305" key="5"/>
<evidence type="ECO:0000305" key="6">
    <source>
    </source>
</evidence>
<evidence type="ECO:0007744" key="7">
    <source>
        <dbReference type="PDB" id="2G29"/>
    </source>
</evidence>
<evidence type="ECO:0007829" key="8">
    <source>
        <dbReference type="PDB" id="2G29"/>
    </source>
</evidence>
<accession>P73452</accession>